<gene>
    <name evidence="1" type="primary">L2</name>
</gene>
<accession>P03106</accession>
<reference key="1">
    <citation type="journal article" date="1983" name="EMBO J.">
        <title>DNA sequence and genome organization of genital human papillomavirus type 6b.</title>
        <authorList>
            <person name="Schwarz E."/>
            <person name="Durst M."/>
            <person name="Demankowski C."/>
            <person name="Lattermann O."/>
            <person name="Zech R."/>
            <person name="Wolfsperger E."/>
            <person name="Suhai S."/>
            <person name="zur Hausen H."/>
        </authorList>
    </citation>
    <scope>NUCLEOTIDE SEQUENCE [GENOMIC DNA]</scope>
</reference>
<proteinExistence type="inferred from homology"/>
<organismHost>
    <name type="scientific">Homo sapiens</name>
    <name type="common">Human</name>
    <dbReference type="NCBI Taxonomy" id="9606"/>
</organismHost>
<feature type="chain" id="PRO_0000133573" description="Minor capsid protein L2">
    <location>
        <begin position="1"/>
        <end position="459"/>
    </location>
</feature>
<feature type="short sequence motif" description="Nuclear localization signal" evidence="1">
    <location>
        <begin position="1"/>
        <end position="12"/>
    </location>
</feature>
<feature type="short sequence motif" description="Nuclear localization signal" evidence="1">
    <location>
        <begin position="442"/>
        <end position="450"/>
    </location>
</feature>
<feature type="disulfide bond" evidence="1">
    <location>
        <begin position="21"/>
        <end position="27"/>
    </location>
</feature>
<name>VL2_HPV6B</name>
<keyword id="KW-0167">Capsid protein</keyword>
<keyword id="KW-1176">Cytoplasmic inwards viral transport</keyword>
<keyword id="KW-1015">Disulfide bond</keyword>
<keyword id="KW-0238">DNA-binding</keyword>
<keyword id="KW-1039">Host endosome</keyword>
<keyword id="KW-1040">Host Golgi apparatus</keyword>
<keyword id="KW-1048">Host nucleus</keyword>
<keyword id="KW-0945">Host-virus interaction</keyword>
<keyword id="KW-0426">Late protein</keyword>
<keyword id="KW-1177">Microtubular inwards viral transport</keyword>
<keyword id="KW-0597">Phosphoprotein</keyword>
<keyword id="KW-1163">Viral penetration into host nucleus</keyword>
<keyword id="KW-0946">Virion</keyword>
<keyword id="KW-1160">Virus entry into host cell</keyword>
<sequence length="459" mass="49392">MAHSRARRRKRASATQLYQTCKLTGTCPPDVIPKVEHNTIADQILKWGSLGVFFGGLGIGTGSGTGGRTGYVPLQTSAKPSITSGPMARPPVVVEPVAPSDPSIVSLIEESAIINAGAPEIVPPAHGGFTITSSETTTPAILDVSVTSHTTTSIFRNPVFTEPSVTQPQPPVEANGHILISAPTVTSHPIEEIPLDTFVVSSSDSGPTSSTPVPGTAPRPRVGLYSRALHQVQVTDPAFLSTPQRLITYDNPVYEGEDVSVQFSHDSIHNAPDEAFMDIIRLHRPAIASRRGLVRYSRIGQRGSMHTRSGKHIGARIHYFYDISPIAQAAEEIEMHPLVAAQDDTFDIYAESFEPGINPTQHPVTNISDTYLTSTPNTVTQPWGNTTVPLSLPNDLFLQSGPDITFPTAPMGTPFSPVTPALPTGPVFITGSGFYLHPAWYFARKRRKRIPLFFSDVAA</sequence>
<evidence type="ECO:0000255" key="1">
    <source>
        <dbReference type="HAMAP-Rule" id="MF_04003"/>
    </source>
</evidence>
<dbReference type="EMBL" id="X00203">
    <property type="protein sequence ID" value="CAA25025.1"/>
    <property type="molecule type" value="Genomic_DNA"/>
</dbReference>
<dbReference type="PIR" id="A03647">
    <property type="entry name" value="P2WL6"/>
</dbReference>
<dbReference type="RefSeq" id="NP_040303.1">
    <property type="nucleotide sequence ID" value="NC_001355.1"/>
</dbReference>
<dbReference type="GeneID" id="1489371"/>
<dbReference type="KEGG" id="vg:1489371"/>
<dbReference type="OrthoDB" id="8047at10239"/>
<dbReference type="Proteomes" id="UP000007676">
    <property type="component" value="Genome"/>
</dbReference>
<dbReference type="GO" id="GO:0043657">
    <property type="term" value="C:host cell"/>
    <property type="evidence" value="ECO:0007669"/>
    <property type="project" value="GOC"/>
</dbReference>
<dbReference type="GO" id="GO:0044174">
    <property type="term" value="C:host cell endosome"/>
    <property type="evidence" value="ECO:0007669"/>
    <property type="project" value="UniProtKB-KW"/>
</dbReference>
<dbReference type="GO" id="GO:0044177">
    <property type="term" value="C:host cell Golgi apparatus"/>
    <property type="evidence" value="ECO:0007669"/>
    <property type="project" value="UniProtKB-SubCell"/>
</dbReference>
<dbReference type="GO" id="GO:0042025">
    <property type="term" value="C:host cell nucleus"/>
    <property type="evidence" value="ECO:0007669"/>
    <property type="project" value="UniProtKB-SubCell"/>
</dbReference>
<dbReference type="GO" id="GO:0019028">
    <property type="term" value="C:viral capsid"/>
    <property type="evidence" value="ECO:0007669"/>
    <property type="project" value="UniProtKB-UniRule"/>
</dbReference>
<dbReference type="GO" id="GO:0003677">
    <property type="term" value="F:DNA binding"/>
    <property type="evidence" value="ECO:0007669"/>
    <property type="project" value="UniProtKB-UniRule"/>
</dbReference>
<dbReference type="GO" id="GO:0005198">
    <property type="term" value="F:structural molecule activity"/>
    <property type="evidence" value="ECO:0007669"/>
    <property type="project" value="UniProtKB-UniRule"/>
</dbReference>
<dbReference type="GO" id="GO:0075521">
    <property type="term" value="P:microtubule-dependent intracellular transport of viral material towards nucleus"/>
    <property type="evidence" value="ECO:0007669"/>
    <property type="project" value="UniProtKB-UniRule"/>
</dbReference>
<dbReference type="GO" id="GO:0046718">
    <property type="term" value="P:symbiont entry into host cell"/>
    <property type="evidence" value="ECO:0007669"/>
    <property type="project" value="UniProtKB-KW"/>
</dbReference>
<dbReference type="GO" id="GO:0075732">
    <property type="term" value="P:viral penetration into host nucleus"/>
    <property type="evidence" value="ECO:0007669"/>
    <property type="project" value="UniProtKB-KW"/>
</dbReference>
<dbReference type="HAMAP" id="MF_04003">
    <property type="entry name" value="PPV_L2"/>
    <property type="match status" value="1"/>
</dbReference>
<dbReference type="InterPro" id="IPR000784">
    <property type="entry name" value="Late_L2"/>
</dbReference>
<dbReference type="Pfam" id="PF00513">
    <property type="entry name" value="Late_protein_L2"/>
    <property type="match status" value="1"/>
</dbReference>
<comment type="function">
    <text evidence="1">Minor protein of the capsid that localizes along the inner surface of the virion, within the central cavities beneath the L1 pentamers. Plays a role in capsid stabilization through interaction with the major capsid protein L1. Once the virion enters the host cell, L2 escorts the genomic DNA into the nucleus by promoting escape from the endosomal compartments and traffic through the host Golgi network. Mechanistically, the C-terminus of L2 possesses a cell-penetrating peptide that protudes from the host endosome, interacts with host cytoplasmic retromer cargo and thereby mediates the capsid delivery to the host trans-Golgi network. Plays a role through its interaction with host dynein in the intracellular microtubule-dependent transport of viral capsid toward the nucleus. Mediates the viral genome import into the nucleus through binding to host importins. Once within the nucleus, L2 localizes viral genomes to host PML bodies in order to activate early gene expression for establishment of infection. Later on, promotes late gene expression by interacting with the viral E2 protein and by inhibiting its transcriptional activation functions. During virion assembly, encapsidates the genome by direct interaction with the viral DNA.</text>
</comment>
<comment type="subunit">
    <text evidence="1">Interacts with major capsid protein L1. Interacts with E2; this interaction inhibits E2 transcriptional activity but not the DNA replication function E2. Interacts with host GADD45GIP1. Interacts with host HSPA8; this interaction is required for L2 nuclear translocation. Interacts with host importins KPNB2 and KPNB3. Forms a complex with importin alpha2-beta1 heterodimers via interaction with the importin alpha2 adapter. Interacts with host DYNLT1; this interaction is essential for virus intracellular transport during entry. Interacts (via C-terminus) with host retromer subunits VPS35 and VPS29.</text>
</comment>
<comment type="subcellular location">
    <subcellularLocation>
        <location evidence="1">Virion</location>
    </subcellularLocation>
    <subcellularLocation>
        <location evidence="1">Host nucleus</location>
    </subcellularLocation>
    <subcellularLocation>
        <location evidence="1">Host early endosome</location>
    </subcellularLocation>
    <subcellularLocation>
        <location evidence="1">Host Golgi apparatus</location>
    </subcellularLocation>
</comment>
<comment type="PTM">
    <text evidence="1">Highly phosphorylated.</text>
</comment>
<comment type="similarity">
    <text evidence="1">Belongs to the papillomaviridae L2 protein family.</text>
</comment>
<organism>
    <name type="scientific">Human papillomavirus type 6b</name>
    <dbReference type="NCBI Taxonomy" id="10600"/>
    <lineage>
        <taxon>Viruses</taxon>
        <taxon>Monodnaviria</taxon>
        <taxon>Shotokuvirae</taxon>
        <taxon>Cossaviricota</taxon>
        <taxon>Papovaviricetes</taxon>
        <taxon>Zurhausenvirales</taxon>
        <taxon>Papillomaviridae</taxon>
        <taxon>Firstpapillomavirinae</taxon>
        <taxon>Alphapapillomavirus</taxon>
        <taxon>Alphapapillomavirus 10</taxon>
    </lineage>
</organism>
<protein>
    <recommendedName>
        <fullName evidence="1">Minor capsid protein L2</fullName>
    </recommendedName>
</protein>